<organism>
    <name type="scientific">Aspergillus fumigatus (strain ATCC MYA-4609 / CBS 101355 / FGSC A1100 / Af293)</name>
    <name type="common">Neosartorya fumigata</name>
    <dbReference type="NCBI Taxonomy" id="330879"/>
    <lineage>
        <taxon>Eukaryota</taxon>
        <taxon>Fungi</taxon>
        <taxon>Dikarya</taxon>
        <taxon>Ascomycota</taxon>
        <taxon>Pezizomycotina</taxon>
        <taxon>Eurotiomycetes</taxon>
        <taxon>Eurotiomycetidae</taxon>
        <taxon>Eurotiales</taxon>
        <taxon>Aspergillaceae</taxon>
        <taxon>Aspergillus</taxon>
        <taxon>Aspergillus subgen. Fumigati</taxon>
    </lineage>
</organism>
<feature type="transit peptide" description="Mitochondrion" evidence="1">
    <location>
        <begin position="1"/>
        <end position="31"/>
    </location>
</feature>
<feature type="chain" id="PRO_0000388096" description="Ubiquinone biosynthesis protein coq4, mitochondrial">
    <location>
        <begin position="32"/>
        <end position="285"/>
    </location>
</feature>
<feature type="binding site" evidence="1">
    <location>
        <position position="167"/>
    </location>
    <ligand>
        <name>Zn(2+)</name>
        <dbReference type="ChEBI" id="CHEBI:29105"/>
    </ligand>
</feature>
<feature type="binding site" evidence="1">
    <location>
        <position position="168"/>
    </location>
    <ligand>
        <name>Zn(2+)</name>
        <dbReference type="ChEBI" id="CHEBI:29105"/>
    </ligand>
</feature>
<feature type="binding site" evidence="1">
    <location>
        <position position="171"/>
    </location>
    <ligand>
        <name>Zn(2+)</name>
        <dbReference type="ChEBI" id="CHEBI:29105"/>
    </ligand>
</feature>
<feature type="binding site" evidence="1">
    <location>
        <position position="183"/>
    </location>
    <ligand>
        <name>Zn(2+)</name>
        <dbReference type="ChEBI" id="CHEBI:29105"/>
    </ligand>
</feature>
<gene>
    <name type="primary">coq4</name>
    <name type="ORF">AFUA_3G06410</name>
</gene>
<evidence type="ECO:0000255" key="1">
    <source>
        <dbReference type="HAMAP-Rule" id="MF_03111"/>
    </source>
</evidence>
<name>COQ4_ASPFU</name>
<comment type="function">
    <text evidence="1">Lyase that catalyzes the C1-decarboxylation of 4-hydroxy-3-methoxy-5-(all-trans-polyprenyl)benzoic acid into 2-methoxy-6-(all-trans-polyprenyl)phenol during ubiquinone biosynthesis.</text>
</comment>
<comment type="catalytic activity">
    <reaction evidence="1">
        <text>a 4-hydroxy-3-methoxy-5-(all-trans-polyprenyl)benzoate + H(+) = a 2-methoxy-6-(all-trans-polyprenyl)phenol + CO2</text>
        <dbReference type="Rhea" id="RHEA:81179"/>
        <dbReference type="Rhea" id="RHEA-COMP:9551"/>
        <dbReference type="Rhea" id="RHEA-COMP:10931"/>
        <dbReference type="ChEBI" id="CHEBI:15378"/>
        <dbReference type="ChEBI" id="CHEBI:16526"/>
        <dbReference type="ChEBI" id="CHEBI:62731"/>
        <dbReference type="ChEBI" id="CHEBI:84443"/>
        <dbReference type="EC" id="4.1.1.130"/>
    </reaction>
</comment>
<comment type="cofactor">
    <cofactor evidence="1">
        <name>Zn(2+)</name>
        <dbReference type="ChEBI" id="CHEBI:29105"/>
    </cofactor>
</comment>
<comment type="pathway">
    <text evidence="1">Cofactor biosynthesis; ubiquinone biosynthesis.</text>
</comment>
<comment type="subunit">
    <text evidence="1">Component of a multi-subunit COQ enzyme complex, composed of at least coq3, coq4, coq5, coq6, coq7 and coq9.</text>
</comment>
<comment type="subcellular location">
    <subcellularLocation>
        <location evidence="1">Mitochondrion inner membrane</location>
        <topology evidence="1">Peripheral membrane protein</topology>
        <orientation evidence="1">Matrix side</orientation>
    </subcellularLocation>
</comment>
<comment type="similarity">
    <text evidence="1">Belongs to the COQ4 family.</text>
</comment>
<protein>
    <recommendedName>
        <fullName evidence="1">Ubiquinone biosynthesis protein coq4, mitochondrial</fullName>
    </recommendedName>
    <alternativeName>
        <fullName>4-hydroxy-3-methoxy-5-polyprenylbenzoate decarboxylase</fullName>
        <ecNumber evidence="1">4.1.1.130</ecNumber>
    </alternativeName>
    <alternativeName>
        <fullName evidence="1">Coenzyme Q biosynthesis protein 4</fullName>
    </alternativeName>
</protein>
<dbReference type="EC" id="4.1.1.130" evidence="1"/>
<dbReference type="EMBL" id="AAHF01000002">
    <property type="protein sequence ID" value="EAL92927.1"/>
    <property type="molecule type" value="Genomic_DNA"/>
</dbReference>
<dbReference type="RefSeq" id="XP_754965.1">
    <property type="nucleotide sequence ID" value="XM_749872.1"/>
</dbReference>
<dbReference type="SMR" id="Q4WWM6"/>
<dbReference type="FunCoup" id="Q4WWM6">
    <property type="interactions" value="519"/>
</dbReference>
<dbReference type="STRING" id="330879.Q4WWM6"/>
<dbReference type="EnsemblFungi" id="EAL92927">
    <property type="protein sequence ID" value="EAL92927"/>
    <property type="gene ID" value="AFUA_3G06410"/>
</dbReference>
<dbReference type="GeneID" id="3512503"/>
<dbReference type="KEGG" id="afm:AFUA_3G06410"/>
<dbReference type="VEuPathDB" id="FungiDB:Afu3g06410"/>
<dbReference type="eggNOG" id="KOG3244">
    <property type="taxonomic scope" value="Eukaryota"/>
</dbReference>
<dbReference type="HOGENOM" id="CLU_061241_0_0_1"/>
<dbReference type="InParanoid" id="Q4WWM6"/>
<dbReference type="OMA" id="YYERHFH"/>
<dbReference type="OrthoDB" id="4249at2759"/>
<dbReference type="UniPathway" id="UPA00232"/>
<dbReference type="Proteomes" id="UP000002530">
    <property type="component" value="Chromosome 3"/>
</dbReference>
<dbReference type="GO" id="GO:0031314">
    <property type="term" value="C:extrinsic component of mitochondrial inner membrane"/>
    <property type="evidence" value="ECO:0007669"/>
    <property type="project" value="UniProtKB-UniRule"/>
</dbReference>
<dbReference type="GO" id="GO:0005739">
    <property type="term" value="C:mitochondrion"/>
    <property type="evidence" value="ECO:0000318"/>
    <property type="project" value="GO_Central"/>
</dbReference>
<dbReference type="GO" id="GO:0006744">
    <property type="term" value="P:ubiquinone biosynthetic process"/>
    <property type="evidence" value="ECO:0007669"/>
    <property type="project" value="UniProtKB-UniRule"/>
</dbReference>
<dbReference type="HAMAP" id="MF_03111">
    <property type="entry name" value="Coq4"/>
    <property type="match status" value="1"/>
</dbReference>
<dbReference type="InterPro" id="IPR007715">
    <property type="entry name" value="Coq4"/>
</dbReference>
<dbReference type="InterPro" id="IPR027540">
    <property type="entry name" value="Coq4_euk"/>
</dbReference>
<dbReference type="PANTHER" id="PTHR12922">
    <property type="entry name" value="UBIQUINONE BIOSYNTHESIS PROTEIN"/>
    <property type="match status" value="1"/>
</dbReference>
<dbReference type="PANTHER" id="PTHR12922:SF7">
    <property type="entry name" value="UBIQUINONE BIOSYNTHESIS PROTEIN COQ4 HOMOLOG, MITOCHONDRIAL"/>
    <property type="match status" value="1"/>
</dbReference>
<dbReference type="Pfam" id="PF05019">
    <property type="entry name" value="Coq4"/>
    <property type="match status" value="1"/>
</dbReference>
<keyword id="KW-0456">Lyase</keyword>
<keyword id="KW-0472">Membrane</keyword>
<keyword id="KW-0479">Metal-binding</keyword>
<keyword id="KW-0496">Mitochondrion</keyword>
<keyword id="KW-0999">Mitochondrion inner membrane</keyword>
<keyword id="KW-1185">Reference proteome</keyword>
<keyword id="KW-0809">Transit peptide</keyword>
<keyword id="KW-0831">Ubiquinone biosynthesis</keyword>
<keyword id="KW-0862">Zinc</keyword>
<proteinExistence type="inferred from homology"/>
<reference key="1">
    <citation type="journal article" date="2005" name="Nature">
        <title>Genomic sequence of the pathogenic and allergenic filamentous fungus Aspergillus fumigatus.</title>
        <authorList>
            <person name="Nierman W.C."/>
            <person name="Pain A."/>
            <person name="Anderson M.J."/>
            <person name="Wortman J.R."/>
            <person name="Kim H.S."/>
            <person name="Arroyo J."/>
            <person name="Berriman M."/>
            <person name="Abe K."/>
            <person name="Archer D.B."/>
            <person name="Bermejo C."/>
            <person name="Bennett J.W."/>
            <person name="Bowyer P."/>
            <person name="Chen D."/>
            <person name="Collins M."/>
            <person name="Coulsen R."/>
            <person name="Davies R."/>
            <person name="Dyer P.S."/>
            <person name="Farman M.L."/>
            <person name="Fedorova N."/>
            <person name="Fedorova N.D."/>
            <person name="Feldblyum T.V."/>
            <person name="Fischer R."/>
            <person name="Fosker N."/>
            <person name="Fraser A."/>
            <person name="Garcia J.L."/>
            <person name="Garcia M.J."/>
            <person name="Goble A."/>
            <person name="Goldman G.H."/>
            <person name="Gomi K."/>
            <person name="Griffith-Jones S."/>
            <person name="Gwilliam R."/>
            <person name="Haas B.J."/>
            <person name="Haas H."/>
            <person name="Harris D.E."/>
            <person name="Horiuchi H."/>
            <person name="Huang J."/>
            <person name="Humphray S."/>
            <person name="Jimenez J."/>
            <person name="Keller N."/>
            <person name="Khouri H."/>
            <person name="Kitamoto K."/>
            <person name="Kobayashi T."/>
            <person name="Konzack S."/>
            <person name="Kulkarni R."/>
            <person name="Kumagai T."/>
            <person name="Lafton A."/>
            <person name="Latge J.-P."/>
            <person name="Li W."/>
            <person name="Lord A."/>
            <person name="Lu C."/>
            <person name="Majoros W.H."/>
            <person name="May G.S."/>
            <person name="Miller B.L."/>
            <person name="Mohamoud Y."/>
            <person name="Molina M."/>
            <person name="Monod M."/>
            <person name="Mouyna I."/>
            <person name="Mulligan S."/>
            <person name="Murphy L.D."/>
            <person name="O'Neil S."/>
            <person name="Paulsen I."/>
            <person name="Penalva M.A."/>
            <person name="Pertea M."/>
            <person name="Price C."/>
            <person name="Pritchard B.L."/>
            <person name="Quail M.A."/>
            <person name="Rabbinowitsch E."/>
            <person name="Rawlins N."/>
            <person name="Rajandream M.A."/>
            <person name="Reichard U."/>
            <person name="Renauld H."/>
            <person name="Robson G.D."/>
            <person name="Rodriguez de Cordoba S."/>
            <person name="Rodriguez-Pena J.M."/>
            <person name="Ronning C.M."/>
            <person name="Rutter S."/>
            <person name="Salzberg S.L."/>
            <person name="Sanchez M."/>
            <person name="Sanchez-Ferrero J.C."/>
            <person name="Saunders D."/>
            <person name="Seeger K."/>
            <person name="Squares R."/>
            <person name="Squares S."/>
            <person name="Takeuchi M."/>
            <person name="Tekaia F."/>
            <person name="Turner G."/>
            <person name="Vazquez de Aldana C.R."/>
            <person name="Weidman J."/>
            <person name="White O."/>
            <person name="Woodward J.R."/>
            <person name="Yu J.-H."/>
            <person name="Fraser C.M."/>
            <person name="Galagan J.E."/>
            <person name="Asai K."/>
            <person name="Machida M."/>
            <person name="Hall N."/>
            <person name="Barrell B.G."/>
            <person name="Denning D.W."/>
        </authorList>
    </citation>
    <scope>NUCLEOTIDE SEQUENCE [LARGE SCALE GENOMIC DNA]</scope>
    <source>
        <strain>ATCC MYA-4609 / CBS 101355 / FGSC A1100 / Af293</strain>
    </source>
</reference>
<accession>Q4WWM6</accession>
<sequence>MSVLGRRGAGLAARGATLAPLATASYLIRPFSALNRPPPKYPGHVPLTFFERGALAVGSAVGSLMNPRRADLIAALGEATATPYFIYRLRDAMLSDPTGRRILRDRPRITSETLKLPYLRTLPENSVGRTYATWLDREGVSPDTRNSVKYIDDEECAYVMQRYRECHDFYHAVTGLPTFVEGELALKAFEFLNTLIPMTGLSIFAFVRLKPAERERFFSLHLPWAVRSGLASKELINVYWEEILEKDVDELRKELGIERPPDLREIRKLMRQQQKREKERLQGKS</sequence>